<sequence length="446" mass="49912">MMITLRKLPLAVAVAAGVMSAQAMAVDFHGYARSGIGWTGSGGEQQCFQTTGAQSKYRLGNECETYAELKLGQEVWKEGDKSFYFDTNVAYSVAQQNDWEATDPAFREANVQGKNLIEWLPGSTIWAGKRFYQRHDVHMIDFYYWDISGPGAGLENIDVGFGKLSLAATRSSEAGGSSSFASNNIYDYTNETANDVFDVRLAQMEINPGGTLELGVDYGRANLRDNYRLVDGASKDGWLFTAEHTQSVLKGFNKFVVQYATDSMTSQGKGLSQGSGVAFDNEKFAYNINNNGHMLRILDHGAISMGDNWDMMYVGMYQDINWDNDNGTKWWTVGIRPMYKWTPIMSTVMEIGYDNVESQRTGDKNNQYKITLAQQWQAGDSIWSRPAIRVFATYAKWDEKWGYDYTGNADNNANFGKAVPADFNGGSFGRGDSDEWTFGAQMEIWW</sequence>
<dbReference type="EMBL" id="CP001396">
    <property type="protein sequence ID" value="ACR63715.1"/>
    <property type="molecule type" value="Genomic_DNA"/>
</dbReference>
<dbReference type="RefSeq" id="WP_000973663.1">
    <property type="nucleotide sequence ID" value="NC_012759.1"/>
</dbReference>
<dbReference type="SMR" id="C5A130"/>
<dbReference type="KEGG" id="ebw:BWG_3750"/>
<dbReference type="HOGENOM" id="CLU_032473_4_1_6"/>
<dbReference type="GO" id="GO:0009279">
    <property type="term" value="C:cell outer membrane"/>
    <property type="evidence" value="ECO:0007669"/>
    <property type="project" value="UniProtKB-SubCell"/>
</dbReference>
<dbReference type="GO" id="GO:0046930">
    <property type="term" value="C:pore complex"/>
    <property type="evidence" value="ECO:0007669"/>
    <property type="project" value="UniProtKB-KW"/>
</dbReference>
<dbReference type="GO" id="GO:0042958">
    <property type="term" value="F:maltodextrin transmembrane transporter activity"/>
    <property type="evidence" value="ECO:0007669"/>
    <property type="project" value="InterPro"/>
</dbReference>
<dbReference type="GO" id="GO:0015481">
    <property type="term" value="F:maltose transporting porin activity"/>
    <property type="evidence" value="ECO:0007669"/>
    <property type="project" value="InterPro"/>
</dbReference>
<dbReference type="GO" id="GO:0006811">
    <property type="term" value="P:monoatomic ion transport"/>
    <property type="evidence" value="ECO:0007669"/>
    <property type="project" value="UniProtKB-KW"/>
</dbReference>
<dbReference type="CDD" id="cd01346">
    <property type="entry name" value="Maltoporin-like"/>
    <property type="match status" value="1"/>
</dbReference>
<dbReference type="FunFam" id="2.40.170.10:FF:000001">
    <property type="entry name" value="Maltoporin"/>
    <property type="match status" value="1"/>
</dbReference>
<dbReference type="Gene3D" id="2.40.170.10">
    <property type="entry name" value="Porin, LamB type"/>
    <property type="match status" value="1"/>
</dbReference>
<dbReference type="HAMAP" id="MF_01301">
    <property type="entry name" value="LamB"/>
    <property type="match status" value="1"/>
</dbReference>
<dbReference type="InterPro" id="IPR050286">
    <property type="entry name" value="G_neg_Bact_CarbUptk_Porin"/>
</dbReference>
<dbReference type="InterPro" id="IPR023738">
    <property type="entry name" value="Maltoporin"/>
</dbReference>
<dbReference type="InterPro" id="IPR003192">
    <property type="entry name" value="Porin_LamB"/>
</dbReference>
<dbReference type="InterPro" id="IPR036998">
    <property type="entry name" value="Porin_LamB_sf"/>
</dbReference>
<dbReference type="NCBIfam" id="NF006860">
    <property type="entry name" value="PRK09360.1"/>
    <property type="match status" value="1"/>
</dbReference>
<dbReference type="PANTHER" id="PTHR38762">
    <property type="entry name" value="CRYPTIC OUTER MEMBRANE PORIN BGLH-RELATED"/>
    <property type="match status" value="1"/>
</dbReference>
<dbReference type="PANTHER" id="PTHR38762:SF1">
    <property type="entry name" value="CRYPTIC OUTER MEMBRANE PORIN BGLH-RELATED"/>
    <property type="match status" value="1"/>
</dbReference>
<dbReference type="Pfam" id="PF02264">
    <property type="entry name" value="LamB"/>
    <property type="match status" value="1"/>
</dbReference>
<dbReference type="SUPFAM" id="SSF56935">
    <property type="entry name" value="Porins"/>
    <property type="match status" value="1"/>
</dbReference>
<evidence type="ECO:0000255" key="1">
    <source>
        <dbReference type="HAMAP-Rule" id="MF_01301"/>
    </source>
</evidence>
<comment type="function">
    <text evidence="1">Involved in the transport of maltose and maltodextrins.</text>
</comment>
<comment type="catalytic activity">
    <reaction evidence="1">
        <text>beta-maltose(in) = beta-maltose(out)</text>
        <dbReference type="Rhea" id="RHEA:29731"/>
        <dbReference type="ChEBI" id="CHEBI:18147"/>
    </reaction>
</comment>
<comment type="subunit">
    <text evidence="1">Homotrimer formed of three 18-stranded antiparallel beta-barrels, containing three independent channels.</text>
</comment>
<comment type="subcellular location">
    <subcellularLocation>
        <location evidence="1">Cell outer membrane</location>
        <topology evidence="1">Multi-pass membrane protein</topology>
    </subcellularLocation>
</comment>
<comment type="induction">
    <text evidence="1">By maltose.</text>
</comment>
<comment type="similarity">
    <text evidence="1">Belongs to the porin LamB (TC 1.B.3) family.</text>
</comment>
<protein>
    <recommendedName>
        <fullName evidence="1">Maltoporin</fullName>
    </recommendedName>
    <alternativeName>
        <fullName evidence="1">Maltose-inducible porin</fullName>
    </alternativeName>
</protein>
<accession>C5A130</accession>
<feature type="signal peptide" evidence="1">
    <location>
        <begin position="1"/>
        <end position="25"/>
    </location>
</feature>
<feature type="chain" id="PRO_1000214245" description="Maltoporin">
    <location>
        <begin position="26"/>
        <end position="446"/>
    </location>
</feature>
<feature type="site" description="Greasy slide, important in sugar transport" evidence="1">
    <location>
        <position position="31"/>
    </location>
</feature>
<feature type="site" description="Greasy slide, important in sugar transport" evidence="1">
    <location>
        <position position="66"/>
    </location>
</feature>
<feature type="site" description="Greasy slide, important in sugar transport" evidence="1">
    <location>
        <position position="99"/>
    </location>
</feature>
<feature type="site" description="Important in sugar transport" evidence="1">
    <location>
        <position position="143"/>
    </location>
</feature>
<feature type="site" description="Greasy slide, important in sugar transport" evidence="1">
    <location>
        <position position="252"/>
    </location>
</feature>
<feature type="site" description="Greasy slide, important in sugar transport" evidence="1">
    <location>
        <position position="383"/>
    </location>
</feature>
<feature type="site" description="Greasy slide, important in sugar transport" evidence="1">
    <location>
        <position position="445"/>
    </location>
</feature>
<organism>
    <name type="scientific">Escherichia coli (strain K12 / MC4100 / BW2952)</name>
    <dbReference type="NCBI Taxonomy" id="595496"/>
    <lineage>
        <taxon>Bacteria</taxon>
        <taxon>Pseudomonadati</taxon>
        <taxon>Pseudomonadota</taxon>
        <taxon>Gammaproteobacteria</taxon>
        <taxon>Enterobacterales</taxon>
        <taxon>Enterobacteriaceae</taxon>
        <taxon>Escherichia</taxon>
    </lineage>
</organism>
<proteinExistence type="inferred from homology"/>
<keyword id="KW-0998">Cell outer membrane</keyword>
<keyword id="KW-0406">Ion transport</keyword>
<keyword id="KW-0472">Membrane</keyword>
<keyword id="KW-0626">Porin</keyword>
<keyword id="KW-0732">Signal</keyword>
<keyword id="KW-0762">Sugar transport</keyword>
<keyword id="KW-0812">Transmembrane</keyword>
<keyword id="KW-1134">Transmembrane beta strand</keyword>
<keyword id="KW-0813">Transport</keyword>
<reference key="1">
    <citation type="journal article" date="2009" name="J. Bacteriol.">
        <title>Genomic sequencing reveals regulatory mutations and recombinational events in the widely used MC4100 lineage of Escherichia coli K-12.</title>
        <authorList>
            <person name="Ferenci T."/>
            <person name="Zhou Z."/>
            <person name="Betteridge T."/>
            <person name="Ren Y."/>
            <person name="Liu Y."/>
            <person name="Feng L."/>
            <person name="Reeves P.R."/>
            <person name="Wang L."/>
        </authorList>
    </citation>
    <scope>NUCLEOTIDE SEQUENCE [LARGE SCALE GENOMIC DNA]</scope>
    <source>
        <strain>K12 / MC4100 / BW2952</strain>
    </source>
</reference>
<name>LAMB_ECOBW</name>
<gene>
    <name evidence="1" type="primary">lamB</name>
    <name type="ordered locus">BWG_3750</name>
</gene>